<evidence type="ECO:0000255" key="1">
    <source>
        <dbReference type="HAMAP-Rule" id="MF_00337"/>
    </source>
</evidence>
<sequence>MPTKKNNFEEQLNSLEKIVTNLENGNVPLEDALKEFQEGVKISRELDKKLTSAEEIVAKLIDSDGTEHKLDPNNAAAPED</sequence>
<gene>
    <name evidence="1" type="primary">xseB</name>
    <name type="ordered locus">lhv_1413</name>
</gene>
<keyword id="KW-0963">Cytoplasm</keyword>
<keyword id="KW-0269">Exonuclease</keyword>
<keyword id="KW-0378">Hydrolase</keyword>
<keyword id="KW-0540">Nuclease</keyword>
<organism>
    <name type="scientific">Lactobacillus helveticus (strain DPC 4571)</name>
    <dbReference type="NCBI Taxonomy" id="405566"/>
    <lineage>
        <taxon>Bacteria</taxon>
        <taxon>Bacillati</taxon>
        <taxon>Bacillota</taxon>
        <taxon>Bacilli</taxon>
        <taxon>Lactobacillales</taxon>
        <taxon>Lactobacillaceae</taxon>
        <taxon>Lactobacillus</taxon>
    </lineage>
</organism>
<proteinExistence type="inferred from homology"/>
<comment type="function">
    <text evidence="1">Bidirectionally degrades single-stranded DNA into large acid-insoluble oligonucleotides, which are then degraded further into small acid-soluble oligonucleotides.</text>
</comment>
<comment type="catalytic activity">
    <reaction evidence="1">
        <text>Exonucleolytic cleavage in either 5'- to 3'- or 3'- to 5'-direction to yield nucleoside 5'-phosphates.</text>
        <dbReference type="EC" id="3.1.11.6"/>
    </reaction>
</comment>
<comment type="subunit">
    <text evidence="1">Heterooligomer composed of large and small subunits.</text>
</comment>
<comment type="subcellular location">
    <subcellularLocation>
        <location evidence="1">Cytoplasm</location>
    </subcellularLocation>
</comment>
<comment type="similarity">
    <text evidence="1">Belongs to the XseB family.</text>
</comment>
<accession>A8YVW8</accession>
<dbReference type="EC" id="3.1.11.6" evidence="1"/>
<dbReference type="EMBL" id="CP000517">
    <property type="protein sequence ID" value="ABX27398.1"/>
    <property type="molecule type" value="Genomic_DNA"/>
</dbReference>
<dbReference type="RefSeq" id="WP_012212031.1">
    <property type="nucleotide sequence ID" value="NC_010080.1"/>
</dbReference>
<dbReference type="SMR" id="A8YVW8"/>
<dbReference type="KEGG" id="lhe:lhv_1413"/>
<dbReference type="eggNOG" id="COG1722">
    <property type="taxonomic scope" value="Bacteria"/>
</dbReference>
<dbReference type="HOGENOM" id="CLU_145918_3_2_9"/>
<dbReference type="Proteomes" id="UP000000790">
    <property type="component" value="Chromosome"/>
</dbReference>
<dbReference type="GO" id="GO:0005829">
    <property type="term" value="C:cytosol"/>
    <property type="evidence" value="ECO:0007669"/>
    <property type="project" value="TreeGrafter"/>
</dbReference>
<dbReference type="GO" id="GO:0009318">
    <property type="term" value="C:exodeoxyribonuclease VII complex"/>
    <property type="evidence" value="ECO:0007669"/>
    <property type="project" value="InterPro"/>
</dbReference>
<dbReference type="GO" id="GO:0008855">
    <property type="term" value="F:exodeoxyribonuclease VII activity"/>
    <property type="evidence" value="ECO:0007669"/>
    <property type="project" value="UniProtKB-UniRule"/>
</dbReference>
<dbReference type="GO" id="GO:0006308">
    <property type="term" value="P:DNA catabolic process"/>
    <property type="evidence" value="ECO:0007669"/>
    <property type="project" value="UniProtKB-UniRule"/>
</dbReference>
<dbReference type="Gene3D" id="1.10.287.1040">
    <property type="entry name" value="Exonuclease VII, small subunit"/>
    <property type="match status" value="1"/>
</dbReference>
<dbReference type="HAMAP" id="MF_00337">
    <property type="entry name" value="Exonuc_7_S"/>
    <property type="match status" value="1"/>
</dbReference>
<dbReference type="InterPro" id="IPR003761">
    <property type="entry name" value="Exonuc_VII_S"/>
</dbReference>
<dbReference type="InterPro" id="IPR037004">
    <property type="entry name" value="Exonuc_VII_ssu_sf"/>
</dbReference>
<dbReference type="NCBIfam" id="NF002138">
    <property type="entry name" value="PRK00977.1-2"/>
    <property type="match status" value="1"/>
</dbReference>
<dbReference type="NCBIfam" id="TIGR01280">
    <property type="entry name" value="xseB"/>
    <property type="match status" value="1"/>
</dbReference>
<dbReference type="PANTHER" id="PTHR34137">
    <property type="entry name" value="EXODEOXYRIBONUCLEASE 7 SMALL SUBUNIT"/>
    <property type="match status" value="1"/>
</dbReference>
<dbReference type="PANTHER" id="PTHR34137:SF1">
    <property type="entry name" value="EXODEOXYRIBONUCLEASE 7 SMALL SUBUNIT"/>
    <property type="match status" value="1"/>
</dbReference>
<dbReference type="Pfam" id="PF02609">
    <property type="entry name" value="Exonuc_VII_S"/>
    <property type="match status" value="1"/>
</dbReference>
<dbReference type="SUPFAM" id="SSF116842">
    <property type="entry name" value="XseB-like"/>
    <property type="match status" value="1"/>
</dbReference>
<protein>
    <recommendedName>
        <fullName evidence="1">Exodeoxyribonuclease 7 small subunit</fullName>
        <ecNumber evidence="1">3.1.11.6</ecNumber>
    </recommendedName>
    <alternativeName>
        <fullName evidence="1">Exodeoxyribonuclease VII small subunit</fullName>
        <shortName evidence="1">Exonuclease VII small subunit</shortName>
    </alternativeName>
</protein>
<name>EX7S_LACH4</name>
<reference key="1">
    <citation type="journal article" date="2008" name="J. Bacteriol.">
        <title>Genome sequence of Lactobacillus helveticus: an organism distinguished by selective gene loss and IS element expansion.</title>
        <authorList>
            <person name="Callanan M."/>
            <person name="Kaleta P."/>
            <person name="O'Callaghan J."/>
            <person name="O'Sullivan O."/>
            <person name="Jordan K."/>
            <person name="McAuliffe O."/>
            <person name="Sangrador-Vegas A."/>
            <person name="Slattery L."/>
            <person name="Fitzgerald G.F."/>
            <person name="Beresford T."/>
            <person name="Ross R.P."/>
        </authorList>
    </citation>
    <scope>NUCLEOTIDE SEQUENCE [LARGE SCALE GENOMIC DNA]</scope>
    <source>
        <strain>DPC 4571</strain>
    </source>
</reference>
<feature type="chain" id="PRO_1000072050" description="Exodeoxyribonuclease 7 small subunit">
    <location>
        <begin position="1"/>
        <end position="80"/>
    </location>
</feature>